<keyword id="KW-0067">ATP-binding</keyword>
<keyword id="KW-0143">Chaperone</keyword>
<keyword id="KW-0963">Cytoplasm</keyword>
<keyword id="KW-0413">Isomerase</keyword>
<keyword id="KW-0547">Nucleotide-binding</keyword>
<gene>
    <name evidence="1" type="primary">groEL</name>
    <name evidence="1" type="synonym">groL</name>
    <name type="synonym">mopA</name>
</gene>
<sequence length="541" mass="57548">MSNTVVTGEVLDKSIREVVRILEDAVGCTAGPKGLTVAISKPYGSPEITKDGYKVMKSIKPEEPLAAAIASIITQSASQCNDKVGDGTTTCSILTAKVIEEVSKAKAAGSDIVSIKNGILKAKEAVLTALMSMRREVEEDEIAQVATLSANGDKNIGSKIAQCVKEVGKDGVITVEESKGFKDLEVEKTDGMQFDRGYLSPYFVTNAEKMLVEFENPYIFLTEKKINLVQSILPILENVARSGRPLLIIAEDVEGEALSTLVLNKLRGGLQVAAVKAPGFGDRRKDMLGDIAVIVGAKYVVNDELAVKMEDIALSDLGTAKSVRITKDATTIIGSVDSSSESIASRTNQIKAQIENSSSDYDKEKLRERLAKLSGGVAVLKVGGSSEVEVKERKDRVEDALHATRAAVEEGVVPGGGAALLYALSSLDGLKGKNDDEQWGIDIIRRAACAPIKRIIKNSGSEEAPCVIQHLLKQNDKELIYNVDTMNYANAFTSGVMDPLKVVRIAFDLAVSLAAVFMTLNAVVVDVPSKNDAAGAGAGGM</sequence>
<evidence type="ECO:0000255" key="1">
    <source>
        <dbReference type="HAMAP-Rule" id="MF_00600"/>
    </source>
</evidence>
<organism>
    <name type="scientific">Anaplasma phagocytophilum</name>
    <name type="common">Ehrlichia phagocytophila</name>
    <dbReference type="NCBI Taxonomy" id="948"/>
    <lineage>
        <taxon>Bacteria</taxon>
        <taxon>Pseudomonadati</taxon>
        <taxon>Pseudomonadota</taxon>
        <taxon>Alphaproteobacteria</taxon>
        <taxon>Rickettsiales</taxon>
        <taxon>Anaplasmataceae</taxon>
        <taxon>Anaplasma</taxon>
        <taxon>phagocytophilum group</taxon>
    </lineage>
</organism>
<reference key="1">
    <citation type="journal article" date="1997" name="J. Clin. Microbiol.">
        <title>PCR amplification and comparison of nucleotide sequences from the groESL heat shock operon of Ehrlichia species.</title>
        <authorList>
            <person name="Sumner J.W."/>
            <person name="Nicholson W.L."/>
            <person name="Massung R.F."/>
        </authorList>
    </citation>
    <scope>NUCLEOTIDE SEQUENCE [GENOMIC DNA]</scope>
    <source>
        <strain>Equi</strain>
        <strain>FG</strain>
        <strain>OS</strain>
    </source>
</reference>
<proteinExistence type="inferred from homology"/>
<comment type="function">
    <text evidence="1">Together with its co-chaperonin GroES, plays an essential role in assisting protein folding. The GroEL-GroES system forms a nano-cage that allows encapsulation of the non-native substrate proteins and provides a physical environment optimized to promote and accelerate protein folding.</text>
</comment>
<comment type="catalytic activity">
    <reaction evidence="1">
        <text>ATP + H2O + a folded polypeptide = ADP + phosphate + an unfolded polypeptide.</text>
        <dbReference type="EC" id="5.6.1.7"/>
    </reaction>
</comment>
<comment type="subunit">
    <text evidence="1">Forms a cylinder of 14 subunits composed of two heptameric rings stacked back-to-back. Interacts with the co-chaperonin GroES.</text>
</comment>
<comment type="subcellular location">
    <subcellularLocation>
        <location evidence="1">Cytoplasm</location>
    </subcellularLocation>
</comment>
<comment type="similarity">
    <text evidence="1">Belongs to the chaperonin (HSP60) family.</text>
</comment>
<dbReference type="EC" id="5.6.1.7" evidence="1"/>
<dbReference type="EMBL" id="U96727">
    <property type="protein sequence ID" value="AAB65623.1"/>
    <property type="molecule type" value="Genomic_DNA"/>
</dbReference>
<dbReference type="EMBL" id="U96729">
    <property type="protein sequence ID" value="AAB65627.1"/>
    <property type="molecule type" value="Genomic_DNA"/>
</dbReference>
<dbReference type="EMBL" id="U96730">
    <property type="protein sequence ID" value="AAB65629.1"/>
    <property type="molecule type" value="Genomic_DNA"/>
</dbReference>
<dbReference type="EMBL" id="U96735">
    <property type="protein sequence ID" value="AAB65639.1"/>
    <property type="molecule type" value="Genomic_DNA"/>
</dbReference>
<dbReference type="SMR" id="O34191"/>
<dbReference type="GO" id="GO:0005737">
    <property type="term" value="C:cytoplasm"/>
    <property type="evidence" value="ECO:0007669"/>
    <property type="project" value="UniProtKB-SubCell"/>
</dbReference>
<dbReference type="GO" id="GO:0005524">
    <property type="term" value="F:ATP binding"/>
    <property type="evidence" value="ECO:0007669"/>
    <property type="project" value="UniProtKB-KW"/>
</dbReference>
<dbReference type="GO" id="GO:0140662">
    <property type="term" value="F:ATP-dependent protein folding chaperone"/>
    <property type="evidence" value="ECO:0007669"/>
    <property type="project" value="InterPro"/>
</dbReference>
<dbReference type="GO" id="GO:0016853">
    <property type="term" value="F:isomerase activity"/>
    <property type="evidence" value="ECO:0007669"/>
    <property type="project" value="UniProtKB-KW"/>
</dbReference>
<dbReference type="GO" id="GO:0042026">
    <property type="term" value="P:protein refolding"/>
    <property type="evidence" value="ECO:0007669"/>
    <property type="project" value="InterPro"/>
</dbReference>
<dbReference type="CDD" id="cd03344">
    <property type="entry name" value="GroEL"/>
    <property type="match status" value="1"/>
</dbReference>
<dbReference type="FunFam" id="3.50.7.10:FF:000001">
    <property type="entry name" value="60 kDa chaperonin"/>
    <property type="match status" value="1"/>
</dbReference>
<dbReference type="Gene3D" id="3.50.7.10">
    <property type="entry name" value="GroEL"/>
    <property type="match status" value="1"/>
</dbReference>
<dbReference type="Gene3D" id="1.10.560.10">
    <property type="entry name" value="GroEL-like equatorial domain"/>
    <property type="match status" value="1"/>
</dbReference>
<dbReference type="Gene3D" id="3.30.260.10">
    <property type="entry name" value="TCP-1-like chaperonin intermediate domain"/>
    <property type="match status" value="1"/>
</dbReference>
<dbReference type="HAMAP" id="MF_00600">
    <property type="entry name" value="CH60"/>
    <property type="match status" value="1"/>
</dbReference>
<dbReference type="InterPro" id="IPR018370">
    <property type="entry name" value="Chaperonin_Cpn60_CS"/>
</dbReference>
<dbReference type="InterPro" id="IPR001844">
    <property type="entry name" value="Cpn60/GroEL"/>
</dbReference>
<dbReference type="InterPro" id="IPR002423">
    <property type="entry name" value="Cpn60/GroEL/TCP-1"/>
</dbReference>
<dbReference type="InterPro" id="IPR027409">
    <property type="entry name" value="GroEL-like_apical_dom_sf"/>
</dbReference>
<dbReference type="InterPro" id="IPR027413">
    <property type="entry name" value="GROEL-like_equatorial_sf"/>
</dbReference>
<dbReference type="InterPro" id="IPR027410">
    <property type="entry name" value="TCP-1-like_intermed_sf"/>
</dbReference>
<dbReference type="NCBIfam" id="TIGR02348">
    <property type="entry name" value="GroEL"/>
    <property type="match status" value="1"/>
</dbReference>
<dbReference type="NCBIfam" id="NF000592">
    <property type="entry name" value="PRK00013.1"/>
    <property type="match status" value="1"/>
</dbReference>
<dbReference type="NCBIfam" id="NF009487">
    <property type="entry name" value="PRK12849.1"/>
    <property type="match status" value="1"/>
</dbReference>
<dbReference type="NCBIfam" id="NF009488">
    <property type="entry name" value="PRK12850.1"/>
    <property type="match status" value="1"/>
</dbReference>
<dbReference type="NCBIfam" id="NF009489">
    <property type="entry name" value="PRK12851.1"/>
    <property type="match status" value="1"/>
</dbReference>
<dbReference type="PANTHER" id="PTHR45633">
    <property type="entry name" value="60 KDA HEAT SHOCK PROTEIN, MITOCHONDRIAL"/>
    <property type="match status" value="1"/>
</dbReference>
<dbReference type="Pfam" id="PF00118">
    <property type="entry name" value="Cpn60_TCP1"/>
    <property type="match status" value="1"/>
</dbReference>
<dbReference type="PRINTS" id="PR00298">
    <property type="entry name" value="CHAPERONIN60"/>
</dbReference>
<dbReference type="SUPFAM" id="SSF52029">
    <property type="entry name" value="GroEL apical domain-like"/>
    <property type="match status" value="1"/>
</dbReference>
<dbReference type="SUPFAM" id="SSF48592">
    <property type="entry name" value="GroEL equatorial domain-like"/>
    <property type="match status" value="1"/>
</dbReference>
<dbReference type="SUPFAM" id="SSF54849">
    <property type="entry name" value="GroEL-intermediate domain like"/>
    <property type="match status" value="1"/>
</dbReference>
<dbReference type="PROSITE" id="PS00296">
    <property type="entry name" value="CHAPERONINS_CPN60"/>
    <property type="match status" value="1"/>
</dbReference>
<protein>
    <recommendedName>
        <fullName evidence="1">Chaperonin GroEL</fullName>
        <ecNumber evidence="1">5.6.1.7</ecNumber>
    </recommendedName>
    <alternativeName>
        <fullName evidence="1">60 kDa chaperonin</fullName>
    </alternativeName>
    <alternativeName>
        <fullName evidence="1">Chaperonin-60</fullName>
        <shortName evidence="1">Cpn60</shortName>
    </alternativeName>
</protein>
<feature type="chain" id="PRO_0000063260" description="Chaperonin GroEL">
    <location>
        <begin position="1"/>
        <end position="541" status="greater than"/>
    </location>
</feature>
<feature type="binding site" evidence="1">
    <location>
        <begin position="29"/>
        <end position="32"/>
    </location>
    <ligand>
        <name>ATP</name>
        <dbReference type="ChEBI" id="CHEBI:30616"/>
    </ligand>
</feature>
<feature type="binding site" evidence="1">
    <location>
        <position position="50"/>
    </location>
    <ligand>
        <name>ATP</name>
        <dbReference type="ChEBI" id="CHEBI:30616"/>
    </ligand>
</feature>
<feature type="binding site" evidence="1">
    <location>
        <begin position="86"/>
        <end position="90"/>
    </location>
    <ligand>
        <name>ATP</name>
        <dbReference type="ChEBI" id="CHEBI:30616"/>
    </ligand>
</feature>
<feature type="binding site" evidence="1">
    <location>
        <position position="416"/>
    </location>
    <ligand>
        <name>ATP</name>
        <dbReference type="ChEBI" id="CHEBI:30616"/>
    </ligand>
</feature>
<feature type="binding site" evidence="1">
    <location>
        <position position="498"/>
    </location>
    <ligand>
        <name>ATP</name>
        <dbReference type="ChEBI" id="CHEBI:30616"/>
    </ligand>
</feature>
<feature type="non-terminal residue">
    <location>
        <position position="541"/>
    </location>
</feature>
<accession>O34191</accession>
<accession>O34337</accession>
<name>CH60_ANAPH</name>